<feature type="chain" id="PRO_0000337792" description="2-keto-4-pentenoate hydratase 2">
    <location>
        <begin position="1"/>
        <end position="262"/>
    </location>
</feature>
<evidence type="ECO:0000255" key="1">
    <source>
        <dbReference type="HAMAP-Rule" id="MF_01655"/>
    </source>
</evidence>
<gene>
    <name evidence="1" type="primary">mhpD2</name>
    <name type="ordered locus">Daro_1354</name>
</gene>
<comment type="function">
    <text evidence="1">Catalyzes the conversion of 2-hydroxypentadienoic acid (enolic form of 2-oxopent-4-enoate) to 4-hydroxy-2-ketopentanoic acid.</text>
</comment>
<comment type="catalytic activity">
    <reaction evidence="1">
        <text>(S)-4-hydroxy-2-oxopentanoate = (2Z)-2-hydroxypenta-2,4-dienoate + H2O</text>
        <dbReference type="Rhea" id="RHEA:22580"/>
        <dbReference type="ChEBI" id="CHEBI:15377"/>
        <dbReference type="ChEBI" id="CHEBI:67152"/>
        <dbReference type="ChEBI" id="CHEBI:73143"/>
        <dbReference type="EC" id="4.2.1.80"/>
    </reaction>
</comment>
<comment type="cofactor">
    <cofactor evidence="1">
        <name>a divalent metal cation</name>
        <dbReference type="ChEBI" id="CHEBI:60240"/>
    </cofactor>
</comment>
<comment type="pathway">
    <text evidence="1">Aromatic compound metabolism; 3-phenylpropanoate degradation.</text>
</comment>
<comment type="similarity">
    <text evidence="1">Belongs to the hydratase/decarboxylase family. MhpD subfamily.</text>
</comment>
<reference key="1">
    <citation type="journal article" date="2009" name="BMC Genomics">
        <title>Metabolic analysis of the soil microbe Dechloromonas aromatica str. RCB: indications of a surprisingly complex life-style and cryptic anaerobic pathways for aromatic degradation.</title>
        <authorList>
            <person name="Salinero K.K."/>
            <person name="Keller K."/>
            <person name="Feil W.S."/>
            <person name="Feil H."/>
            <person name="Trong S."/>
            <person name="Di Bartolo G."/>
            <person name="Lapidus A."/>
        </authorList>
    </citation>
    <scope>NUCLEOTIDE SEQUENCE [LARGE SCALE GENOMIC DNA]</scope>
    <source>
        <strain>RCB</strain>
    </source>
</reference>
<proteinExistence type="inferred from homology"/>
<protein>
    <recommendedName>
        <fullName evidence="1">2-keto-4-pentenoate hydratase 2</fullName>
        <ecNumber evidence="1">4.2.1.80</ecNumber>
    </recommendedName>
    <alternativeName>
        <fullName evidence="1">2-hydroxypentadienoic acid hydratase 2</fullName>
    </alternativeName>
</protein>
<dbReference type="EC" id="4.2.1.80" evidence="1"/>
<dbReference type="EMBL" id="CP000089">
    <property type="protein sequence ID" value="AAZ46103.1"/>
    <property type="molecule type" value="Genomic_DNA"/>
</dbReference>
<dbReference type="SMR" id="Q47GC8"/>
<dbReference type="STRING" id="159087.Daro_1354"/>
<dbReference type="KEGG" id="dar:Daro_1354"/>
<dbReference type="eggNOG" id="COG3971">
    <property type="taxonomic scope" value="Bacteria"/>
</dbReference>
<dbReference type="HOGENOM" id="CLU_060136_4_1_4"/>
<dbReference type="OrthoDB" id="9792137at2"/>
<dbReference type="UniPathway" id="UPA00714"/>
<dbReference type="GO" id="GO:0005737">
    <property type="term" value="C:cytoplasm"/>
    <property type="evidence" value="ECO:0007669"/>
    <property type="project" value="TreeGrafter"/>
</dbReference>
<dbReference type="GO" id="GO:0008684">
    <property type="term" value="F:2-oxopent-4-enoate hydratase activity"/>
    <property type="evidence" value="ECO:0007669"/>
    <property type="project" value="UniProtKB-UniRule"/>
</dbReference>
<dbReference type="GO" id="GO:0030145">
    <property type="term" value="F:manganese ion binding"/>
    <property type="evidence" value="ECO:0007669"/>
    <property type="project" value="InterPro"/>
</dbReference>
<dbReference type="GO" id="GO:0019380">
    <property type="term" value="P:3-phenylpropionate catabolic process"/>
    <property type="evidence" value="ECO:0007669"/>
    <property type="project" value="UniProtKB-UniRule"/>
</dbReference>
<dbReference type="Gene3D" id="3.90.850.10">
    <property type="entry name" value="Fumarylacetoacetase-like, C-terminal domain"/>
    <property type="match status" value="1"/>
</dbReference>
<dbReference type="HAMAP" id="MF_01655">
    <property type="entry name" value="MhpD"/>
    <property type="match status" value="1"/>
</dbReference>
<dbReference type="InterPro" id="IPR011234">
    <property type="entry name" value="Fumarylacetoacetase-like_C"/>
</dbReference>
<dbReference type="InterPro" id="IPR036663">
    <property type="entry name" value="Fumarylacetoacetase_C_sf"/>
</dbReference>
<dbReference type="InterPro" id="IPR050772">
    <property type="entry name" value="Hydratase-Decarb/MhpD_sf"/>
</dbReference>
<dbReference type="InterPro" id="IPR023793">
    <property type="entry name" value="Keto_pentenoate-hydratase"/>
</dbReference>
<dbReference type="NCBIfam" id="NF008461">
    <property type="entry name" value="PRK11342.1"/>
    <property type="match status" value="1"/>
</dbReference>
<dbReference type="PANTHER" id="PTHR30143:SF0">
    <property type="entry name" value="2-KETO-4-PENTENOATE HYDRATASE"/>
    <property type="match status" value="1"/>
</dbReference>
<dbReference type="PANTHER" id="PTHR30143">
    <property type="entry name" value="ACID HYDRATASE"/>
    <property type="match status" value="1"/>
</dbReference>
<dbReference type="Pfam" id="PF01557">
    <property type="entry name" value="FAA_hydrolase"/>
    <property type="match status" value="1"/>
</dbReference>
<dbReference type="SUPFAM" id="SSF56529">
    <property type="entry name" value="FAH"/>
    <property type="match status" value="1"/>
</dbReference>
<organism>
    <name type="scientific">Dechloromonas aromatica (strain RCB)</name>
    <dbReference type="NCBI Taxonomy" id="159087"/>
    <lineage>
        <taxon>Bacteria</taxon>
        <taxon>Pseudomonadati</taxon>
        <taxon>Pseudomonadota</taxon>
        <taxon>Betaproteobacteria</taxon>
        <taxon>Rhodocyclales</taxon>
        <taxon>Azonexaceae</taxon>
        <taxon>Dechloromonas</taxon>
    </lineage>
</organism>
<sequence>MTNNFMAPEAAAALLKAATADGRPIAPLRDRLAIADQDSAYAVQEINTRAWLAEGRRLVGRKIGLTSLAVQAQLGVDQPDFGMLFADMAVGDGEIVAAGRLIQPKVEAEVALILGRDLTQERHTYADLIRATEYALPSIEIVDSRIENWNIKFVDTVADNASSGLFVLGGRSVRLCDIDLTACAMEMKRGDEVVSRGNGRACLGSPLNAAIWLADVMVRCGRPLQAGDIVLTGALGPMVAVKSGERFDVSIEGLGNVSALFA</sequence>
<accession>Q47GC8</accession>
<name>MHPD2_DECAR</name>
<keyword id="KW-0058">Aromatic hydrocarbons catabolism</keyword>
<keyword id="KW-0456">Lyase</keyword>